<name>CYSH_MYCTU</name>
<comment type="function">
    <text evidence="1 2 5 6">Catalyzes the formation of sulfite from adenosine 5'-phosphosulfate (APS) using thioredoxin as an electron donor.</text>
</comment>
<comment type="catalytic activity">
    <reaction evidence="1 2 5 6">
        <text>[thioredoxin]-disulfide + sulfite + AMP + 2 H(+) = adenosine 5'-phosphosulfate + [thioredoxin]-dithiol</text>
        <dbReference type="Rhea" id="RHEA:21976"/>
        <dbReference type="Rhea" id="RHEA-COMP:10698"/>
        <dbReference type="Rhea" id="RHEA-COMP:10700"/>
        <dbReference type="ChEBI" id="CHEBI:15378"/>
        <dbReference type="ChEBI" id="CHEBI:17359"/>
        <dbReference type="ChEBI" id="CHEBI:29950"/>
        <dbReference type="ChEBI" id="CHEBI:50058"/>
        <dbReference type="ChEBI" id="CHEBI:58243"/>
        <dbReference type="ChEBI" id="CHEBI:456215"/>
        <dbReference type="EC" id="1.8.4.10"/>
    </reaction>
    <physiologicalReaction direction="right-to-left" evidence="2 5 6">
        <dbReference type="Rhea" id="RHEA:21978"/>
    </physiologicalReaction>
</comment>
<comment type="cofactor">
    <cofactor evidence="1 3 8">
        <name>[4Fe-4S] cluster</name>
        <dbReference type="ChEBI" id="CHEBI:49883"/>
    </cofactor>
    <text evidence="1 8">Binds 1 [4Fe-4S] cluster per subunit.</text>
</comment>
<comment type="activity regulation">
    <text evidence="6">Inhibited by adenosine 5'-diphosphate (ADP).</text>
</comment>
<comment type="biophysicochemical properties">
    <kinetics>
        <KM evidence="6">24.3 uM for adenosine 5'-phosphosulfate</KM>
        <text evidence="6">kcat is 7.8 min(-1).</text>
    </kinetics>
</comment>
<comment type="pathway">
    <text evidence="1 11">Sulfur metabolism; hydrogen sulfide biosynthesis; sulfite from sulfate.</text>
</comment>
<comment type="subunit">
    <text evidence="8">Monomer.</text>
</comment>
<comment type="subcellular location">
    <subcellularLocation>
        <location evidence="1">Cytoplasm</location>
    </subcellularLocation>
</comment>
<comment type="miscellaneous">
    <text evidence="4 5 7">Was identified as a high-confidence drug target (PubMed:19099550, PubMed:19678707, PubMed:25710356). Inhibitors that target the Fe-S cluster have been developed and studied (PubMed:25710356).</text>
</comment>
<comment type="similarity">
    <text evidence="1 10">Belongs to the PAPS reductase family. CysH subfamily.</text>
</comment>
<reference key="1">
    <citation type="journal article" date="1998" name="Nature">
        <title>Deciphering the biology of Mycobacterium tuberculosis from the complete genome sequence.</title>
        <authorList>
            <person name="Cole S.T."/>
            <person name="Brosch R."/>
            <person name="Parkhill J."/>
            <person name="Garnier T."/>
            <person name="Churcher C.M."/>
            <person name="Harris D.E."/>
            <person name="Gordon S.V."/>
            <person name="Eiglmeier K."/>
            <person name="Gas S."/>
            <person name="Barry C.E. III"/>
            <person name="Tekaia F."/>
            <person name="Badcock K."/>
            <person name="Basham D."/>
            <person name="Brown D."/>
            <person name="Chillingworth T."/>
            <person name="Connor R."/>
            <person name="Davies R.M."/>
            <person name="Devlin K."/>
            <person name="Feltwell T."/>
            <person name="Gentles S."/>
            <person name="Hamlin N."/>
            <person name="Holroyd S."/>
            <person name="Hornsby T."/>
            <person name="Jagels K."/>
            <person name="Krogh A."/>
            <person name="McLean J."/>
            <person name="Moule S."/>
            <person name="Murphy L.D."/>
            <person name="Oliver S."/>
            <person name="Osborne J."/>
            <person name="Quail M.A."/>
            <person name="Rajandream M.A."/>
            <person name="Rogers J."/>
            <person name="Rutter S."/>
            <person name="Seeger K."/>
            <person name="Skelton S."/>
            <person name="Squares S."/>
            <person name="Squares R."/>
            <person name="Sulston J.E."/>
            <person name="Taylor K."/>
            <person name="Whitehead S."/>
            <person name="Barrell B.G."/>
        </authorList>
    </citation>
    <scope>NUCLEOTIDE SEQUENCE [LARGE SCALE GENOMIC DNA]</scope>
    <source>
        <strain>ATCC 25618 / H37Rv</strain>
    </source>
</reference>
<reference key="2">
    <citation type="journal article" date="2002" name="J. Biol. Chem.">
        <title>5'-adenosinephosphosulfate lies at a metabolic branch point in mycobacteria.</title>
        <authorList>
            <person name="Williams S.J."/>
            <person name="Senaratne R.H."/>
            <person name="Mougous J.D."/>
            <person name="Riley L.W."/>
            <person name="Bertozzi C.R."/>
        </authorList>
    </citation>
    <scope>FUNCTION</scope>
    <scope>CATALYTIC ACTIVITY</scope>
    <scope>PATHWAY</scope>
</reference>
<reference key="3">
    <citation type="journal article" date="2007" name="J. Am. Soc. Mass Spectrom.">
        <title>Noncovalent complexes of APS reductase from M. tuberculosis: delineating a mechanistic model using ESI-FTICR MS.</title>
        <authorList>
            <person name="Gao H."/>
            <person name="Leary J."/>
            <person name="Carroll K.S."/>
            <person name="Bertozzi C.R."/>
            <person name="Chen H."/>
        </authorList>
    </citation>
    <scope>COFACTOR</scope>
</reference>
<reference key="4">
    <citation type="journal article" date="2008" name="BMC Syst. Biol.">
        <title>targetTB: a target identification pipeline for Mycobacterium tuberculosis through an interactome, reactome and genome-scale structural analysis.</title>
        <authorList>
            <person name="Raman K."/>
            <person name="Yeturu K."/>
            <person name="Chandra N."/>
        </authorList>
    </citation>
    <scope>IDENTIFICATION AS A DRUG TARGET [LARGE SCALE ANALYSIS]</scope>
</reference>
<reference key="5">
    <citation type="journal article" date="2009" name="J. Med. Chem.">
        <title>Identification of critical ligand binding determinants in Mycobacterium tuberculosis adenosine-5'-phosphosulfate reductase.</title>
        <authorList>
            <person name="Hong J.A."/>
            <person name="Bhave D.P."/>
            <person name="Carroll K.S."/>
        </authorList>
    </citation>
    <scope>FUNCTION</scope>
    <scope>CATALYTIC ACTIVITY</scope>
    <scope>IDENTIFICATION AS A DRUG TARGET</scope>
</reference>
<reference key="6">
    <citation type="journal article" date="2011" name="Mol. Cell. Proteomics">
        <title>Proteogenomic analysis of Mycobacterium tuberculosis by high resolution mass spectrometry.</title>
        <authorList>
            <person name="Kelkar D.S."/>
            <person name="Kumar D."/>
            <person name="Kumar P."/>
            <person name="Balakrishnan L."/>
            <person name="Muthusamy B."/>
            <person name="Yadav A.K."/>
            <person name="Shrivastava P."/>
            <person name="Marimuthu A."/>
            <person name="Anand S."/>
            <person name="Sundaram H."/>
            <person name="Kingsbury R."/>
            <person name="Harsha H.C."/>
            <person name="Nair B."/>
            <person name="Prasad T.S."/>
            <person name="Chauhan D.S."/>
            <person name="Katoch K."/>
            <person name="Katoch V.M."/>
            <person name="Kumar P."/>
            <person name="Chaerkady R."/>
            <person name="Ramachandran S."/>
            <person name="Dash D."/>
            <person name="Pandey A."/>
        </authorList>
    </citation>
    <scope>IDENTIFICATION BY MASS SPECTROMETRY [LARGE SCALE ANALYSIS]</scope>
    <source>
        <strain>ATCC 25618 / H37Rv</strain>
    </source>
</reference>
<reference key="7">
    <citation type="journal article" date="2013" name="Anal. Biochem.">
        <title>A continuous spectrophotometric assay for adenosine 5'-phosphosulfate reductase activity with sulfite-selective probes.</title>
        <authorList>
            <person name="Paritala H."/>
            <person name="Carroll K.S."/>
        </authorList>
    </citation>
    <scope>FUNCTION</scope>
    <scope>CATALYTIC ACTIVITY</scope>
    <scope>ACTIVITY REGULATION</scope>
    <scope>BIOPHYSICOCHEMICAL PROPERTIES</scope>
</reference>
<reference key="8">
    <citation type="journal article" date="2015" name="Nucleosides Nucleotides Nucleic Acids">
        <title>Design, synthesis and evaluation of Fe-S targeted adenosine 5'-phosphosulfate reductase inhibitors.</title>
        <authorList>
            <person name="Paritala H."/>
            <person name="Suzuki Y."/>
            <person name="Carroll K.S."/>
        </authorList>
    </citation>
    <scope>IDENTIFICATION AS A DRUG TARGET</scope>
</reference>
<reference evidence="12 13 14" key="9">
    <citation type="journal article" date="2021" name="ACS Omega">
        <title>Crystal Structure of the [4Fe-4S] Cluster-Containing Adenosine-5'-phosphosulfate Reductase from Mycobacterium tuberculosis.</title>
        <authorList>
            <person name="Feliciano P.R."/>
            <person name="Carroll K.S."/>
            <person name="Drennan C.L."/>
        </authorList>
    </citation>
    <scope>X-RAY CRYSTALLOGRAPHY (3.09 ANGSTROMS) IN COMPLEXES WITH [4FE-4S] CLUSTER; ADENOSINE 5'-PHOSPHOSULFATE AND AMP</scope>
    <scope>COFACTOR</scope>
    <scope>SUBUNIT</scope>
</reference>
<gene>
    <name evidence="1 9" type="primary">cysH</name>
    <name type="ordered locus">Rv2392</name>
    <name type="ORF">MTCY253.29c</name>
</gene>
<feature type="chain" id="PRO_0000100633" description="Adenosine 5'-phosphosulfate reductase">
    <location>
        <begin position="1"/>
        <end position="254"/>
    </location>
</feature>
<feature type="active site" description="Nucleophile; cysteine thiosulfonate intermediate" evidence="1">
    <location>
        <position position="249"/>
    </location>
</feature>
<feature type="binding site" evidence="8 13">
    <location>
        <position position="64"/>
    </location>
    <ligand>
        <name>adenosine 5'-phosphosulfate</name>
        <dbReference type="ChEBI" id="CHEBI:58243"/>
    </ligand>
</feature>
<feature type="binding site" evidence="8 14">
    <location>
        <position position="64"/>
    </location>
    <ligand>
        <name>AMP</name>
        <dbReference type="ChEBI" id="CHEBI:456215"/>
    </ligand>
</feature>
<feature type="binding site" evidence="8 13">
    <location>
        <position position="88"/>
    </location>
    <ligand>
        <name>adenosine 5'-phosphosulfate</name>
        <dbReference type="ChEBI" id="CHEBI:58243"/>
    </ligand>
</feature>
<feature type="binding site" evidence="8 14">
    <location>
        <position position="88"/>
    </location>
    <ligand>
        <name>AMP</name>
        <dbReference type="ChEBI" id="CHEBI:456215"/>
    </ligand>
</feature>
<feature type="binding site" evidence="1 8 12 13 14">
    <location>
        <position position="140"/>
    </location>
    <ligand>
        <name>[4Fe-4S] cluster</name>
        <dbReference type="ChEBI" id="CHEBI:49883"/>
    </ligand>
</feature>
<feature type="binding site" evidence="1 8 12 13 14">
    <location>
        <position position="141"/>
    </location>
    <ligand>
        <name>[4Fe-4S] cluster</name>
        <dbReference type="ChEBI" id="CHEBI:49883"/>
    </ligand>
</feature>
<feature type="binding site" evidence="8 13">
    <location>
        <position position="162"/>
    </location>
    <ligand>
        <name>adenosine 5'-phosphosulfate</name>
        <dbReference type="ChEBI" id="CHEBI:58243"/>
    </ligand>
</feature>
<feature type="binding site" evidence="8 14">
    <location>
        <position position="162"/>
    </location>
    <ligand>
        <name>AMP</name>
        <dbReference type="ChEBI" id="CHEBI:456215"/>
    </ligand>
</feature>
<feature type="binding site" evidence="8 13">
    <location>
        <position position="167"/>
    </location>
    <ligand>
        <name>adenosine 5'-phosphosulfate</name>
        <dbReference type="ChEBI" id="CHEBI:58243"/>
    </ligand>
</feature>
<feature type="binding site" evidence="1 8 12 13 14">
    <location>
        <position position="223"/>
    </location>
    <ligand>
        <name>[4Fe-4S] cluster</name>
        <dbReference type="ChEBI" id="CHEBI:49883"/>
    </ligand>
</feature>
<feature type="binding site" evidence="1 8 12 13 14">
    <location>
        <position position="226"/>
    </location>
    <ligand>
        <name>[4Fe-4S] cluster</name>
        <dbReference type="ChEBI" id="CHEBI:49883"/>
    </ligand>
</feature>
<feature type="helix" evidence="16">
    <location>
        <begin position="10"/>
        <end position="23"/>
    </location>
</feature>
<feature type="turn" evidence="16">
    <location>
        <begin position="24"/>
        <end position="26"/>
    </location>
</feature>
<feature type="helix" evidence="16">
    <location>
        <begin position="29"/>
        <end position="39"/>
    </location>
</feature>
<feature type="strand" evidence="16">
    <location>
        <begin position="60"/>
        <end position="64"/>
    </location>
</feature>
<feature type="strand" evidence="16">
    <location>
        <begin position="67"/>
        <end position="70"/>
    </location>
</feature>
<feature type="helix" evidence="16">
    <location>
        <begin position="71"/>
        <end position="79"/>
    </location>
</feature>
<feature type="strand" evidence="16">
    <location>
        <begin position="83"/>
        <end position="88"/>
    </location>
</feature>
<feature type="helix" evidence="16">
    <location>
        <begin position="95"/>
        <end position="107"/>
    </location>
</feature>
<feature type="strand" evidence="16">
    <location>
        <begin position="108"/>
        <end position="115"/>
    </location>
</feature>
<feature type="helix" evidence="16">
    <location>
        <begin position="121"/>
        <end position="128"/>
    </location>
</feature>
<feature type="helix" evidence="16">
    <location>
        <begin position="132"/>
        <end position="135"/>
    </location>
</feature>
<feature type="helix" evidence="16">
    <location>
        <begin position="137"/>
        <end position="144"/>
    </location>
</feature>
<feature type="helix" evidence="16">
    <location>
        <begin position="146"/>
        <end position="153"/>
    </location>
</feature>
<feature type="strand" evidence="16">
    <location>
        <begin position="157"/>
        <end position="161"/>
    </location>
</feature>
<feature type="helix" evidence="16">
    <location>
        <begin position="165"/>
        <end position="167"/>
    </location>
</feature>
<feature type="helix" evidence="16">
    <location>
        <begin position="169"/>
        <end position="171"/>
    </location>
</feature>
<feature type="strand" evidence="16">
    <location>
        <begin position="176"/>
        <end position="180"/>
    </location>
</feature>
<feature type="turn" evidence="16">
    <location>
        <begin position="181"/>
        <end position="184"/>
    </location>
</feature>
<feature type="strand" evidence="16">
    <location>
        <begin position="185"/>
        <end position="188"/>
    </location>
</feature>
<feature type="turn" evidence="15">
    <location>
        <begin position="190"/>
        <end position="193"/>
    </location>
</feature>
<feature type="helix" evidence="16">
    <location>
        <begin position="196"/>
        <end position="206"/>
    </location>
</feature>
<feature type="helix" evidence="16">
    <location>
        <begin position="212"/>
        <end position="215"/>
    </location>
</feature>
<feature type="helix" evidence="16">
    <location>
        <begin position="224"/>
        <end position="226"/>
    </location>
</feature>
<dbReference type="EC" id="1.8.4.10" evidence="1 2 5 6"/>
<dbReference type="EMBL" id="AL123456">
    <property type="protein sequence ID" value="CCP45180.1"/>
    <property type="molecule type" value="Genomic_DNA"/>
</dbReference>
<dbReference type="PIR" id="C70682">
    <property type="entry name" value="C70682"/>
</dbReference>
<dbReference type="RefSeq" id="NP_216908.1">
    <property type="nucleotide sequence ID" value="NC_000962.3"/>
</dbReference>
<dbReference type="RefSeq" id="WP_003412303.1">
    <property type="nucleotide sequence ID" value="NZ_NVQJ01000029.1"/>
</dbReference>
<dbReference type="PDB" id="7LHR">
    <property type="method" value="X-ray"/>
    <property type="resolution" value="3.11 A"/>
    <property type="chains" value="A/B=1-254"/>
</dbReference>
<dbReference type="PDB" id="7LHS">
    <property type="method" value="X-ray"/>
    <property type="resolution" value="3.11 A"/>
    <property type="chains" value="A/B=1-254"/>
</dbReference>
<dbReference type="PDB" id="7LHU">
    <property type="method" value="X-ray"/>
    <property type="resolution" value="3.09 A"/>
    <property type="chains" value="A/B=1-254"/>
</dbReference>
<dbReference type="PDBsum" id="7LHR"/>
<dbReference type="PDBsum" id="7LHS"/>
<dbReference type="PDBsum" id="7LHU"/>
<dbReference type="SMR" id="P9WIK3"/>
<dbReference type="FunCoup" id="P9WIK3">
    <property type="interactions" value="96"/>
</dbReference>
<dbReference type="STRING" id="83332.Rv2392"/>
<dbReference type="PaxDb" id="83332-Rv2392"/>
<dbReference type="DNASU" id="885250"/>
<dbReference type="GeneID" id="885250"/>
<dbReference type="KEGG" id="mtu:Rv2392"/>
<dbReference type="KEGG" id="mtv:RVBD_2392"/>
<dbReference type="TubercuList" id="Rv2392"/>
<dbReference type="eggNOG" id="COG0175">
    <property type="taxonomic scope" value="Bacteria"/>
</dbReference>
<dbReference type="InParanoid" id="P9WIK3"/>
<dbReference type="OrthoDB" id="9794018at2"/>
<dbReference type="PhylomeDB" id="P9WIK3"/>
<dbReference type="Reactome" id="R-MTU-936721">
    <property type="pathway name" value="Cysteine synthesis from O-acetylserine"/>
</dbReference>
<dbReference type="Proteomes" id="UP000001584">
    <property type="component" value="Chromosome"/>
</dbReference>
<dbReference type="GO" id="GO:0005829">
    <property type="term" value="C:cytosol"/>
    <property type="evidence" value="ECO:0000304"/>
    <property type="project" value="Reactome"/>
</dbReference>
<dbReference type="GO" id="GO:0005886">
    <property type="term" value="C:plasma membrane"/>
    <property type="evidence" value="ECO:0007005"/>
    <property type="project" value="MTBBASE"/>
</dbReference>
<dbReference type="GO" id="GO:0051539">
    <property type="term" value="F:4 iron, 4 sulfur cluster binding"/>
    <property type="evidence" value="ECO:0000314"/>
    <property type="project" value="MTBBASE"/>
</dbReference>
<dbReference type="GO" id="GO:0043866">
    <property type="term" value="F:adenylyl-sulfate reductase (thioredoxin) activity"/>
    <property type="evidence" value="ECO:0000314"/>
    <property type="project" value="MTBBASE"/>
</dbReference>
<dbReference type="GO" id="GO:0046872">
    <property type="term" value="F:metal ion binding"/>
    <property type="evidence" value="ECO:0007669"/>
    <property type="project" value="UniProtKB-KW"/>
</dbReference>
<dbReference type="GO" id="GO:0004604">
    <property type="term" value="F:phosphoadenylyl-sulfate reductase (thioredoxin) activity"/>
    <property type="evidence" value="ECO:0007669"/>
    <property type="project" value="UniProtKB-UniRule"/>
</dbReference>
<dbReference type="GO" id="GO:0019344">
    <property type="term" value="P:cysteine biosynthetic process"/>
    <property type="evidence" value="ECO:0007669"/>
    <property type="project" value="InterPro"/>
</dbReference>
<dbReference type="GO" id="GO:0070814">
    <property type="term" value="P:hydrogen sulfide biosynthetic process"/>
    <property type="evidence" value="ECO:0007669"/>
    <property type="project" value="UniProtKB-UniRule"/>
</dbReference>
<dbReference type="GO" id="GO:0019379">
    <property type="term" value="P:sulfate assimilation, phosphoadenylyl sulfate reduction by phosphoadenylyl-sulfate reductase (thioredoxin)"/>
    <property type="evidence" value="ECO:0007669"/>
    <property type="project" value="UniProtKB-UniRule"/>
</dbReference>
<dbReference type="CDD" id="cd23945">
    <property type="entry name" value="PAPS_reductase"/>
    <property type="match status" value="1"/>
</dbReference>
<dbReference type="FunFam" id="3.40.50.620:FF:000136">
    <property type="entry name" value="Probable phosphoadenosine phosphosulfate reductase"/>
    <property type="match status" value="1"/>
</dbReference>
<dbReference type="Gene3D" id="3.40.50.620">
    <property type="entry name" value="HUPs"/>
    <property type="match status" value="1"/>
</dbReference>
<dbReference type="HAMAP" id="MF_00063">
    <property type="entry name" value="CysH"/>
    <property type="match status" value="1"/>
</dbReference>
<dbReference type="InterPro" id="IPR011798">
    <property type="entry name" value="APS_reductase"/>
</dbReference>
<dbReference type="InterPro" id="IPR004511">
    <property type="entry name" value="PAPS/APS_Rdtase"/>
</dbReference>
<dbReference type="InterPro" id="IPR002500">
    <property type="entry name" value="PAPS_reduct_dom"/>
</dbReference>
<dbReference type="InterPro" id="IPR014729">
    <property type="entry name" value="Rossmann-like_a/b/a_fold"/>
</dbReference>
<dbReference type="NCBIfam" id="TIGR02055">
    <property type="entry name" value="APS_reductase"/>
    <property type="match status" value="1"/>
</dbReference>
<dbReference type="NCBIfam" id="TIGR00434">
    <property type="entry name" value="cysH"/>
    <property type="match status" value="1"/>
</dbReference>
<dbReference type="NCBIfam" id="NF002537">
    <property type="entry name" value="PRK02090.1"/>
    <property type="match status" value="1"/>
</dbReference>
<dbReference type="PANTHER" id="PTHR46509">
    <property type="entry name" value="PHOSPHOADENOSINE PHOSPHOSULFATE REDUCTASE"/>
    <property type="match status" value="1"/>
</dbReference>
<dbReference type="PANTHER" id="PTHR46509:SF1">
    <property type="entry name" value="PHOSPHOADENOSINE PHOSPHOSULFATE REDUCTASE"/>
    <property type="match status" value="1"/>
</dbReference>
<dbReference type="Pfam" id="PF01507">
    <property type="entry name" value="PAPS_reduct"/>
    <property type="match status" value="1"/>
</dbReference>
<dbReference type="PIRSF" id="PIRSF000857">
    <property type="entry name" value="PAPS_reductase"/>
    <property type="match status" value="1"/>
</dbReference>
<dbReference type="SUPFAM" id="SSF52402">
    <property type="entry name" value="Adenine nucleotide alpha hydrolases-like"/>
    <property type="match status" value="1"/>
</dbReference>
<sequence>MSGETTRLTEPQLRELAARGAAELDGATATDMLRWTDETFGDIGGAGGGVSGHRGWTTCNYVVASNMADAVLVDLAAKVRPGVPVIFLDTGYHFVETIGTRDAIESVYDVRVLNVTPEHTVAEQDELLGKDLFARNPHECCRLRKVVPLGKTLRGYSAWVTGLRRVDAPTRANAPLVSFDETFKLVKVNPLAAWTDQDVQEYIADNDVLVNPLVREGYPSIGCAPCTAKPAEGADPRSGRWQGLAKTECGLHAS</sequence>
<evidence type="ECO:0000255" key="1">
    <source>
        <dbReference type="HAMAP-Rule" id="MF_00063"/>
    </source>
</evidence>
<evidence type="ECO:0000269" key="2">
    <source>
    </source>
</evidence>
<evidence type="ECO:0000269" key="3">
    <source>
    </source>
</evidence>
<evidence type="ECO:0000269" key="4">
    <source>
    </source>
</evidence>
<evidence type="ECO:0000269" key="5">
    <source>
    </source>
</evidence>
<evidence type="ECO:0000269" key="6">
    <source>
    </source>
</evidence>
<evidence type="ECO:0000269" key="7">
    <source>
    </source>
</evidence>
<evidence type="ECO:0000269" key="8">
    <source>
    </source>
</evidence>
<evidence type="ECO:0000303" key="9">
    <source>
    </source>
</evidence>
<evidence type="ECO:0000305" key="10"/>
<evidence type="ECO:0000305" key="11">
    <source>
    </source>
</evidence>
<evidence type="ECO:0007744" key="12">
    <source>
        <dbReference type="PDB" id="7LHR"/>
    </source>
</evidence>
<evidence type="ECO:0007744" key="13">
    <source>
        <dbReference type="PDB" id="7LHS"/>
    </source>
</evidence>
<evidence type="ECO:0007744" key="14">
    <source>
        <dbReference type="PDB" id="7LHU"/>
    </source>
</evidence>
<evidence type="ECO:0007829" key="15">
    <source>
        <dbReference type="PDB" id="7LHR"/>
    </source>
</evidence>
<evidence type="ECO:0007829" key="16">
    <source>
        <dbReference type="PDB" id="7LHU"/>
    </source>
</evidence>
<keyword id="KW-0002">3D-structure</keyword>
<keyword id="KW-0963">Cytoplasm</keyword>
<keyword id="KW-0408">Iron</keyword>
<keyword id="KW-0411">Iron-sulfur</keyword>
<keyword id="KW-0479">Metal-binding</keyword>
<keyword id="KW-0560">Oxidoreductase</keyword>
<keyword id="KW-1185">Reference proteome</keyword>
<proteinExistence type="evidence at protein level"/>
<organism>
    <name type="scientific">Mycobacterium tuberculosis (strain ATCC 25618 / H37Rv)</name>
    <dbReference type="NCBI Taxonomy" id="83332"/>
    <lineage>
        <taxon>Bacteria</taxon>
        <taxon>Bacillati</taxon>
        <taxon>Actinomycetota</taxon>
        <taxon>Actinomycetes</taxon>
        <taxon>Mycobacteriales</taxon>
        <taxon>Mycobacteriaceae</taxon>
        <taxon>Mycobacterium</taxon>
        <taxon>Mycobacterium tuberculosis complex</taxon>
    </lineage>
</organism>
<accession>P9WIK3</accession>
<accession>L0T9P0</accession>
<accession>P65668</accession>
<accession>P71752</accession>
<protein>
    <recommendedName>
        <fullName evidence="1 9">Adenosine 5'-phosphosulfate reductase</fullName>
        <shortName evidence="1 9">APS reductase</shortName>
        <ecNumber evidence="1 2 5 6">1.8.4.10</ecNumber>
    </recommendedName>
    <alternativeName>
        <fullName evidence="1">5'-adenylylsulfate reductase</fullName>
    </alternativeName>
    <alternativeName>
        <fullName evidence="1">Thioredoxin-dependent 5'-adenylylsulfate reductase</fullName>
    </alternativeName>
</protein>